<comment type="function">
    <text evidence="1">Catalyzes the hydrolysis of glutamine to glutamate and ammonia as part of the biosynthesis of pyridoxal 5'-phosphate. The resulting ammonia molecule is channeled to the active site of PdxS.</text>
</comment>
<comment type="catalytic activity">
    <reaction evidence="1">
        <text>aldehydo-D-ribose 5-phosphate + D-glyceraldehyde 3-phosphate + L-glutamine = pyridoxal 5'-phosphate + L-glutamate + phosphate + 3 H2O + H(+)</text>
        <dbReference type="Rhea" id="RHEA:31507"/>
        <dbReference type="ChEBI" id="CHEBI:15377"/>
        <dbReference type="ChEBI" id="CHEBI:15378"/>
        <dbReference type="ChEBI" id="CHEBI:29985"/>
        <dbReference type="ChEBI" id="CHEBI:43474"/>
        <dbReference type="ChEBI" id="CHEBI:58273"/>
        <dbReference type="ChEBI" id="CHEBI:58359"/>
        <dbReference type="ChEBI" id="CHEBI:59776"/>
        <dbReference type="ChEBI" id="CHEBI:597326"/>
        <dbReference type="EC" id="4.3.3.6"/>
    </reaction>
</comment>
<comment type="catalytic activity">
    <reaction evidence="1">
        <text>L-glutamine + H2O = L-glutamate + NH4(+)</text>
        <dbReference type="Rhea" id="RHEA:15889"/>
        <dbReference type="ChEBI" id="CHEBI:15377"/>
        <dbReference type="ChEBI" id="CHEBI:28938"/>
        <dbReference type="ChEBI" id="CHEBI:29985"/>
        <dbReference type="ChEBI" id="CHEBI:58359"/>
        <dbReference type="EC" id="3.5.1.2"/>
    </reaction>
</comment>
<comment type="pathway">
    <text evidence="1">Cofactor biosynthesis; pyridoxal 5'-phosphate biosynthesis.</text>
</comment>
<comment type="subunit">
    <text evidence="1">In the presence of PdxS, forms a dodecamer of heterodimers. Only shows activity in the heterodimer.</text>
</comment>
<comment type="similarity">
    <text evidence="1">Belongs to the glutaminase PdxT/SNO family.</text>
</comment>
<feature type="chain" id="PRO_0000335566" description="Pyridoxal 5'-phosphate synthase subunit PdxT">
    <location>
        <begin position="1"/>
        <end position="191"/>
    </location>
</feature>
<feature type="active site" description="Nucleophile" evidence="1">
    <location>
        <position position="81"/>
    </location>
</feature>
<feature type="active site" description="Charge relay system" evidence="1">
    <location>
        <position position="172"/>
    </location>
</feature>
<feature type="active site" description="Charge relay system" evidence="1">
    <location>
        <position position="174"/>
    </location>
</feature>
<feature type="binding site" evidence="1">
    <location>
        <begin position="52"/>
        <end position="54"/>
    </location>
    <ligand>
        <name>L-glutamine</name>
        <dbReference type="ChEBI" id="CHEBI:58359"/>
    </ligand>
</feature>
<feature type="binding site" evidence="1">
    <location>
        <position position="108"/>
    </location>
    <ligand>
        <name>L-glutamine</name>
        <dbReference type="ChEBI" id="CHEBI:58359"/>
    </ligand>
</feature>
<feature type="binding site" evidence="1">
    <location>
        <begin position="136"/>
        <end position="137"/>
    </location>
    <ligand>
        <name>L-glutamine</name>
        <dbReference type="ChEBI" id="CHEBI:58359"/>
    </ligand>
</feature>
<keyword id="KW-0315">Glutamine amidotransferase</keyword>
<keyword id="KW-0378">Hydrolase</keyword>
<keyword id="KW-0456">Lyase</keyword>
<keyword id="KW-0663">Pyridoxal phosphate</keyword>
<protein>
    <recommendedName>
        <fullName evidence="1">Pyridoxal 5'-phosphate synthase subunit PdxT</fullName>
        <ecNumber evidence="1">4.3.3.6</ecNumber>
    </recommendedName>
    <alternativeName>
        <fullName evidence="1">Pdx2</fullName>
    </alternativeName>
    <alternativeName>
        <fullName evidence="1">Pyridoxal 5'-phosphate synthase glutaminase subunit</fullName>
        <ecNumber evidence="1">3.5.1.2</ecNumber>
    </alternativeName>
</protein>
<dbReference type="EC" id="4.3.3.6" evidence="1"/>
<dbReference type="EC" id="3.5.1.2" evidence="1"/>
<dbReference type="EMBL" id="CP000687">
    <property type="protein sequence ID" value="ABY69136.1"/>
    <property type="molecule type" value="Genomic_DNA"/>
</dbReference>
<dbReference type="RefSeq" id="WP_005600690.1">
    <property type="nucleotide sequence ID" value="NC_010278.1"/>
</dbReference>
<dbReference type="SMR" id="B0BUD1"/>
<dbReference type="MEROPS" id="C26.A32"/>
<dbReference type="KEGG" id="apj:APJL_0566"/>
<dbReference type="HOGENOM" id="CLU_069674_2_0_6"/>
<dbReference type="UniPathway" id="UPA00245"/>
<dbReference type="Proteomes" id="UP000008547">
    <property type="component" value="Chromosome"/>
</dbReference>
<dbReference type="GO" id="GO:0005829">
    <property type="term" value="C:cytosol"/>
    <property type="evidence" value="ECO:0007669"/>
    <property type="project" value="TreeGrafter"/>
</dbReference>
<dbReference type="GO" id="GO:1903600">
    <property type="term" value="C:glutaminase complex"/>
    <property type="evidence" value="ECO:0007669"/>
    <property type="project" value="TreeGrafter"/>
</dbReference>
<dbReference type="GO" id="GO:0004359">
    <property type="term" value="F:glutaminase activity"/>
    <property type="evidence" value="ECO:0007669"/>
    <property type="project" value="UniProtKB-UniRule"/>
</dbReference>
<dbReference type="GO" id="GO:0036381">
    <property type="term" value="F:pyridoxal 5'-phosphate synthase (glutamine hydrolysing) activity"/>
    <property type="evidence" value="ECO:0007669"/>
    <property type="project" value="UniProtKB-UniRule"/>
</dbReference>
<dbReference type="GO" id="GO:0006543">
    <property type="term" value="P:glutamine catabolic process"/>
    <property type="evidence" value="ECO:0007669"/>
    <property type="project" value="UniProtKB-UniRule"/>
</dbReference>
<dbReference type="GO" id="GO:0042823">
    <property type="term" value="P:pyridoxal phosphate biosynthetic process"/>
    <property type="evidence" value="ECO:0007669"/>
    <property type="project" value="UniProtKB-UniRule"/>
</dbReference>
<dbReference type="GO" id="GO:0008614">
    <property type="term" value="P:pyridoxine metabolic process"/>
    <property type="evidence" value="ECO:0007669"/>
    <property type="project" value="TreeGrafter"/>
</dbReference>
<dbReference type="CDD" id="cd01749">
    <property type="entry name" value="GATase1_PB"/>
    <property type="match status" value="1"/>
</dbReference>
<dbReference type="FunFam" id="3.40.50.880:FF:000010">
    <property type="entry name" value="uncharacterized protein LOC100176842 isoform X2"/>
    <property type="match status" value="1"/>
</dbReference>
<dbReference type="Gene3D" id="3.40.50.880">
    <property type="match status" value="1"/>
</dbReference>
<dbReference type="HAMAP" id="MF_01615">
    <property type="entry name" value="PdxT"/>
    <property type="match status" value="1"/>
</dbReference>
<dbReference type="InterPro" id="IPR029062">
    <property type="entry name" value="Class_I_gatase-like"/>
</dbReference>
<dbReference type="InterPro" id="IPR002161">
    <property type="entry name" value="PdxT/SNO"/>
</dbReference>
<dbReference type="InterPro" id="IPR021196">
    <property type="entry name" value="PdxT/SNO_CS"/>
</dbReference>
<dbReference type="NCBIfam" id="TIGR03800">
    <property type="entry name" value="PLP_synth_Pdx2"/>
    <property type="match status" value="1"/>
</dbReference>
<dbReference type="PANTHER" id="PTHR31559">
    <property type="entry name" value="PYRIDOXAL 5'-PHOSPHATE SYNTHASE SUBUNIT SNO"/>
    <property type="match status" value="1"/>
</dbReference>
<dbReference type="PANTHER" id="PTHR31559:SF0">
    <property type="entry name" value="PYRIDOXAL 5'-PHOSPHATE SYNTHASE SUBUNIT SNO1-RELATED"/>
    <property type="match status" value="1"/>
</dbReference>
<dbReference type="Pfam" id="PF01174">
    <property type="entry name" value="SNO"/>
    <property type="match status" value="1"/>
</dbReference>
<dbReference type="PIRSF" id="PIRSF005639">
    <property type="entry name" value="Glut_amidoT_SNO"/>
    <property type="match status" value="1"/>
</dbReference>
<dbReference type="SUPFAM" id="SSF52317">
    <property type="entry name" value="Class I glutamine amidotransferase-like"/>
    <property type="match status" value="1"/>
</dbReference>
<dbReference type="PROSITE" id="PS01236">
    <property type="entry name" value="PDXT_SNO_1"/>
    <property type="match status" value="1"/>
</dbReference>
<dbReference type="PROSITE" id="PS51130">
    <property type="entry name" value="PDXT_SNO_2"/>
    <property type="match status" value="1"/>
</dbReference>
<proteinExistence type="inferred from homology"/>
<gene>
    <name evidence="1" type="primary">pdxT</name>
    <name type="ordered locus">APJL_0566</name>
</gene>
<organism>
    <name type="scientific">Actinobacillus pleuropneumoniae serotype 3 (strain JL03)</name>
    <dbReference type="NCBI Taxonomy" id="434271"/>
    <lineage>
        <taxon>Bacteria</taxon>
        <taxon>Pseudomonadati</taxon>
        <taxon>Pseudomonadota</taxon>
        <taxon>Gammaproteobacteria</taxon>
        <taxon>Pasteurellales</taxon>
        <taxon>Pasteurellaceae</taxon>
        <taxon>Actinobacillus</taxon>
    </lineage>
</organism>
<evidence type="ECO:0000255" key="1">
    <source>
        <dbReference type="HAMAP-Rule" id="MF_01615"/>
    </source>
</evidence>
<name>PDXT_ACTPJ</name>
<sequence length="191" mass="20842">MNDYTKYTIGVLSLQGAVSEHIAQIETLGAKAIAVKSLSELQQVDALVLPGGESTAMRRLMHSSGLFQALKSFDKPILGTCAGLILLANKLEGGEPPHLAKMNIQVQRNAFGRQVDSFQTDLMIKGFADPFPAVFIRAPYISRIGSEVEVLAEWQGNVVFAKQGNLLACAFHPELTSDTRVVELFLQQLKE</sequence>
<reference key="1">
    <citation type="journal article" date="2008" name="PLoS ONE">
        <title>Genome biology of Actinobacillus pleuropneumoniae JL03, an isolate of serotype 3 prevalent in China.</title>
        <authorList>
            <person name="Xu Z."/>
            <person name="Zhou Y."/>
            <person name="Li L."/>
            <person name="Zhou R."/>
            <person name="Xiao S."/>
            <person name="Wan Y."/>
            <person name="Zhang S."/>
            <person name="Wang K."/>
            <person name="Li W."/>
            <person name="Li L."/>
            <person name="Jin H."/>
            <person name="Kang M."/>
            <person name="Dalai B."/>
            <person name="Li T."/>
            <person name="Liu L."/>
            <person name="Cheng Y."/>
            <person name="Zhang L."/>
            <person name="Xu T."/>
            <person name="Zheng H."/>
            <person name="Pu S."/>
            <person name="Wang B."/>
            <person name="Gu W."/>
            <person name="Zhang X.L."/>
            <person name="Zhu G.-F."/>
            <person name="Wang S."/>
            <person name="Zhao G.-P."/>
            <person name="Chen H."/>
        </authorList>
    </citation>
    <scope>NUCLEOTIDE SEQUENCE [LARGE SCALE GENOMIC DNA]</scope>
    <source>
        <strain>JL03</strain>
    </source>
</reference>
<accession>B0BUD1</accession>